<feature type="chain" id="PRO_0000342996" description="Putative HMP-PP phosphatase">
    <location>
        <begin position="1"/>
        <end position="148"/>
    </location>
</feature>
<feature type="binding site" evidence="1">
    <location>
        <position position="88"/>
    </location>
    <ligand>
        <name>Mg(2+)</name>
        <dbReference type="ChEBI" id="CHEBI:18420"/>
    </ligand>
</feature>
<proteinExistence type="uncertain"/>
<keyword id="KW-0378">Hydrolase</keyword>
<keyword id="KW-0460">Magnesium</keyword>
<keyword id="KW-0479">Metal-binding</keyword>
<keyword id="KW-1185">Reference proteome</keyword>
<reference key="1">
    <citation type="journal article" date="2005" name="Nucleic Acids Res.">
        <title>Genome dynamics and diversity of Shigella species, the etiologic agents of bacillary dysentery.</title>
        <authorList>
            <person name="Yang F."/>
            <person name="Yang J."/>
            <person name="Zhang X."/>
            <person name="Chen L."/>
            <person name="Jiang Y."/>
            <person name="Yan Y."/>
            <person name="Tang X."/>
            <person name="Wang J."/>
            <person name="Xiong Z."/>
            <person name="Dong J."/>
            <person name="Xue Y."/>
            <person name="Zhu Y."/>
            <person name="Xu X."/>
            <person name="Sun L."/>
            <person name="Chen S."/>
            <person name="Nie H."/>
            <person name="Peng J."/>
            <person name="Xu J."/>
            <person name="Wang Y."/>
            <person name="Yuan Z."/>
            <person name="Wen Y."/>
            <person name="Yao Z."/>
            <person name="Shen Y."/>
            <person name="Qiang B."/>
            <person name="Hou Y."/>
            <person name="Yu J."/>
            <person name="Jin Q."/>
        </authorList>
    </citation>
    <scope>NUCLEOTIDE SEQUENCE [LARGE SCALE GENOMIC DNA]</scope>
    <source>
        <strain>Sd197</strain>
    </source>
</reference>
<sequence length="148" mass="16353">MPVHLNQIIDVKKMPLGSVTKICFCGDHDDLTRLQIQLYEALGERAHLCFSATDCLEVLPVGCNKGAALTVLTQHLGLSLRDCMAFGDAMNDREMLGSVGSGFIMGNAMPQLRAELPHLPVIGHCRNQAVSHYLTHWLDYPHLPYSPE</sequence>
<gene>
    <name type="primary">cof</name>
    <name type="ordered locus">SDY_0383</name>
</gene>
<comment type="function">
    <text evidence="1">Catalyzes the hydrolysis of 4-amino-2-methyl-5-hydroxymethylpyrimidine pyrophosphate (HMP-PP) to 4-amino-2-methyl-5-hydroxymethylpyrimidine phosphate (HMP-P).</text>
</comment>
<comment type="cofactor">
    <cofactor evidence="1">
        <name>Mg(2+)</name>
        <dbReference type="ChEBI" id="CHEBI:18420"/>
    </cofactor>
</comment>
<comment type="similarity">
    <text evidence="2">Belongs to the HAD-like hydrolase superfamily. Cof family.</text>
</comment>
<comment type="caution">
    <text evidence="2">Could be the product of a pseudogene. It is N-terminally truncated compared to othologs.</text>
</comment>
<dbReference type="EC" id="3.6.1.-"/>
<dbReference type="EMBL" id="CP000034">
    <property type="protein sequence ID" value="ABB60596.1"/>
    <property type="molecule type" value="Genomic_DNA"/>
</dbReference>
<dbReference type="RefSeq" id="YP_402085.1">
    <property type="nucleotide sequence ID" value="NC_007606.1"/>
</dbReference>
<dbReference type="SMR" id="Q32JB1"/>
<dbReference type="STRING" id="300267.SDY_0383"/>
<dbReference type="EnsemblBacteria" id="ABB60596">
    <property type="protein sequence ID" value="ABB60596"/>
    <property type="gene ID" value="SDY_0383"/>
</dbReference>
<dbReference type="KEGG" id="sdy:SDY_0383"/>
<dbReference type="PATRIC" id="fig|300267.13.peg.454"/>
<dbReference type="HOGENOM" id="CLU_1757584_0_0_6"/>
<dbReference type="Proteomes" id="UP000002716">
    <property type="component" value="Chromosome"/>
</dbReference>
<dbReference type="GO" id="GO:0000287">
    <property type="term" value="F:magnesium ion binding"/>
    <property type="evidence" value="ECO:0000250"/>
    <property type="project" value="UniProtKB"/>
</dbReference>
<dbReference type="GO" id="GO:0016791">
    <property type="term" value="F:phosphatase activity"/>
    <property type="evidence" value="ECO:0000250"/>
    <property type="project" value="UniProtKB"/>
</dbReference>
<dbReference type="Gene3D" id="3.30.1240.10">
    <property type="match status" value="1"/>
</dbReference>
<dbReference type="Gene3D" id="3.40.50.1000">
    <property type="entry name" value="HAD superfamily/HAD-like"/>
    <property type="match status" value="1"/>
</dbReference>
<dbReference type="InterPro" id="IPR036412">
    <property type="entry name" value="HAD-like_sf"/>
</dbReference>
<dbReference type="InterPro" id="IPR006379">
    <property type="entry name" value="HAD-SF_hydro_IIB"/>
</dbReference>
<dbReference type="InterPro" id="IPR023214">
    <property type="entry name" value="HAD_sf"/>
</dbReference>
<dbReference type="NCBIfam" id="TIGR01484">
    <property type="entry name" value="HAD-SF-IIB"/>
    <property type="match status" value="1"/>
</dbReference>
<dbReference type="PANTHER" id="PTHR47267">
    <property type="match status" value="1"/>
</dbReference>
<dbReference type="PANTHER" id="PTHR47267:SF2">
    <property type="entry name" value="HMP-PP PHOSPHATASE"/>
    <property type="match status" value="1"/>
</dbReference>
<dbReference type="Pfam" id="PF08282">
    <property type="entry name" value="Hydrolase_3"/>
    <property type="match status" value="1"/>
</dbReference>
<dbReference type="SUPFAM" id="SSF56784">
    <property type="entry name" value="HAD-like"/>
    <property type="match status" value="1"/>
</dbReference>
<dbReference type="PROSITE" id="PS01229">
    <property type="entry name" value="COF_2"/>
    <property type="match status" value="1"/>
</dbReference>
<accession>Q32JB1</accession>
<name>COF_SHIDS</name>
<protein>
    <recommendedName>
        <fullName>Putative HMP-PP phosphatase</fullName>
        <ecNumber>3.6.1.-</ecNumber>
    </recommendedName>
</protein>
<evidence type="ECO:0000250" key="1"/>
<evidence type="ECO:0000305" key="2"/>
<organism>
    <name type="scientific">Shigella dysenteriae serotype 1 (strain Sd197)</name>
    <dbReference type="NCBI Taxonomy" id="300267"/>
    <lineage>
        <taxon>Bacteria</taxon>
        <taxon>Pseudomonadati</taxon>
        <taxon>Pseudomonadota</taxon>
        <taxon>Gammaproteobacteria</taxon>
        <taxon>Enterobacterales</taxon>
        <taxon>Enterobacteriaceae</taxon>
        <taxon>Shigella</taxon>
    </lineage>
</organism>